<protein>
    <recommendedName>
        <fullName>Trimethylguanosine synthase</fullName>
        <ecNumber evidence="11">2.1.1.-</ecNumber>
    </recommendedName>
    <alternativeName>
        <fullName>CLL-associated antigen KW-2</fullName>
    </alternativeName>
    <alternativeName>
        <fullName>Cap-specific guanine-N(2) methyltransferase</fullName>
    </alternativeName>
    <alternativeName>
        <fullName>Hepatocellular carcinoma-associated antigen 137</fullName>
    </alternativeName>
    <alternativeName>
        <fullName>Nuclear receptor coactivator 6-interacting protein</fullName>
    </alternativeName>
    <alternativeName>
        <fullName>PRIP-interacting protein with methyltransferase motif</fullName>
        <shortName>PIMT</shortName>
        <shortName>PIPMT</shortName>
    </alternativeName>
</protein>
<sequence length="853" mass="96620">MCCEKWSRVAEMFLFIEEREDCKILCLCSRAFVEDRKLYNLGLKGYYIRDSGNNSGDQATEEEEGGYSCGTAESHDSKGIGLDESELDSEAELMRSMGLPLQFGRITAHKDFEVSMNTRNKVKIKKKKHQKKYLDEIVQESWRKEYEEDDILASDDPSSIEQYENTRTYELQSKKDTETENPPVENTLSPKLEITEKWEKYWNEYGGGLLWQSWQEKHPGQALSSEPWNFPDTKEEWEQHYSQLYWYYLEQFQYWEAQGWTFDASQSCDTDTYTSKTEADDKNDEKCMKVDLVSFPSSPIMVDNDSSGTSDKDHSEILDGISNIKLNSEEVTQSQLDSCTSHDGHQQLSEVSSKRECPASGQSEPRNGGTNEESNSSGNTNTDPPAEDSQKSSGANTSKDRPHASGTDGDESEEDPPEHKPSKLKRSHELDIDENPASDFDDSGSLLGFKYGSGQKYGGIPNFSHRQVRYLEKNVKLKSKYLDMRRQIKMKNKHIFFTKESEKPFFKKSKILSKVEKFLTWVNKPMDEEASQESSSHDNVHDASTSSDSEEQDMSVKKGDDLLETNNPEPEKCQSVSSAGELETENYERDSLLATVPDEQDCVTQEVPDSRQAETEAEVKKKKNKKKNKKVNGLPPEIAAVPELAKYWAQRYRLFSRFDDGIKLDREGWFSVTPEKIAEHIAGRVSQSFKCDVVVDAFCGVGGNTIQFALTGMRVIAIDIDPVKIALARNNAEVYGIADKIEFICGDFLLLASFLKADVVFLSPPWGGPDYATAETFDIRTMMSPDGFEIFRLSKKITNNIVYFLPRNADIDQVASLAGPGGQVEIEQNFLNNKLKTITAYFGDLIRRPASET</sequence>
<proteinExistence type="evidence at protein level"/>
<keyword id="KW-0002">3D-structure</keyword>
<keyword id="KW-0963">Cytoplasm</keyword>
<keyword id="KW-0489">Methyltransferase</keyword>
<keyword id="KW-0539">Nucleus</keyword>
<keyword id="KW-0597">Phosphoprotein</keyword>
<keyword id="KW-1267">Proteomics identification</keyword>
<keyword id="KW-1185">Reference proteome</keyword>
<keyword id="KW-0949">S-adenosyl-L-methionine</keyword>
<keyword id="KW-0804">Transcription</keyword>
<keyword id="KW-0805">Transcription regulation</keyword>
<keyword id="KW-0808">Transferase</keyword>
<accession>Q96RS0</accession>
<accession>A6NJQ5</accession>
<accession>Q5GH23</accession>
<accession>Q8TDG9</accession>
<accession>Q96QU3</accession>
<accession>Q9H5V3</accession>
<reference key="1">
    <citation type="journal article" date="2001" name="Proc. Natl. Acad. Sci. U.S.A.">
        <title>Cloning and characterization of PIMT, a protein with a methyltransferase domain, which interacts with and enhances nuclear receptor coactivator PRIP function.</title>
        <authorList>
            <person name="Zhu Y.-J."/>
            <person name="Qi C."/>
            <person name="Cao W.-Q."/>
            <person name="Yeldandi A.V."/>
            <person name="Rao M.S."/>
            <person name="Reddy J.K."/>
        </authorList>
    </citation>
    <scope>NUCLEOTIDE SEQUENCE [MRNA]</scope>
    <scope>FUNCTION</scope>
    <scope>INTERACTION WITH NCOA6</scope>
    <scope>TISSUE SPECIFICITY</scope>
    <scope>VARIANT THR-16</scope>
    <source>
        <tissue>Liver</tissue>
    </source>
</reference>
<reference key="2">
    <citation type="journal article" date="2002" name="Blood">
        <title>Identification of tumor-associated antigens in chronic lymphocytic leukemia by SEREX.</title>
        <authorList>
            <person name="Krackhardt A.M."/>
            <person name="Witzens M."/>
            <person name="Harig S."/>
            <person name="Hodi F.S."/>
            <person name="Zauls A.J."/>
            <person name="Chessia M."/>
            <person name="Barrett P."/>
            <person name="Gribben J.G."/>
        </authorList>
    </citation>
    <scope>NUCLEOTIDE SEQUENCE [MRNA]</scope>
    <scope>VARIANT THR-16</scope>
</reference>
<reference key="3">
    <citation type="journal article" date="2002" name="J. Immunol.">
        <title>Large scale identification of human hepatocellular carcinoma-associated antigens by autoantibodies.</title>
        <authorList>
            <person name="Wang Y."/>
            <person name="Han K.-J."/>
            <person name="Pang X.-W."/>
            <person name="Vaughan H.A."/>
            <person name="Qu W."/>
            <person name="Dong X.-Y."/>
            <person name="Peng J.-R."/>
            <person name="Zhao H.-T."/>
            <person name="Rui J.-A."/>
            <person name="Leng X.-S."/>
            <person name="Cebon J."/>
            <person name="Burgess A.W."/>
            <person name="Chen W.-F."/>
        </authorList>
    </citation>
    <scope>NUCLEOTIDE SEQUENCE [MRNA]</scope>
    <scope>VARIANT THR-16</scope>
</reference>
<reference key="4">
    <citation type="journal article" date="2006" name="Nature">
        <title>DNA sequence and analysis of human chromosome 8.</title>
        <authorList>
            <person name="Nusbaum C."/>
            <person name="Mikkelsen T.S."/>
            <person name="Zody M.C."/>
            <person name="Asakawa S."/>
            <person name="Taudien S."/>
            <person name="Garber M."/>
            <person name="Kodira C.D."/>
            <person name="Schueler M.G."/>
            <person name="Shimizu A."/>
            <person name="Whittaker C.A."/>
            <person name="Chang J.L."/>
            <person name="Cuomo C.A."/>
            <person name="Dewar K."/>
            <person name="FitzGerald M.G."/>
            <person name="Yang X."/>
            <person name="Allen N.R."/>
            <person name="Anderson S."/>
            <person name="Asakawa T."/>
            <person name="Blechschmidt K."/>
            <person name="Bloom T."/>
            <person name="Borowsky M.L."/>
            <person name="Butler J."/>
            <person name="Cook A."/>
            <person name="Corum B."/>
            <person name="DeArellano K."/>
            <person name="DeCaprio D."/>
            <person name="Dooley K.T."/>
            <person name="Dorris L. III"/>
            <person name="Engels R."/>
            <person name="Gloeckner G."/>
            <person name="Hafez N."/>
            <person name="Hagopian D.S."/>
            <person name="Hall J.L."/>
            <person name="Ishikawa S.K."/>
            <person name="Jaffe D.B."/>
            <person name="Kamat A."/>
            <person name="Kudoh J."/>
            <person name="Lehmann R."/>
            <person name="Lokitsang T."/>
            <person name="Macdonald P."/>
            <person name="Major J.E."/>
            <person name="Matthews C.D."/>
            <person name="Mauceli E."/>
            <person name="Menzel U."/>
            <person name="Mihalev A.H."/>
            <person name="Minoshima S."/>
            <person name="Murayama Y."/>
            <person name="Naylor J.W."/>
            <person name="Nicol R."/>
            <person name="Nguyen C."/>
            <person name="O'Leary S.B."/>
            <person name="O'Neill K."/>
            <person name="Parker S.C.J."/>
            <person name="Polley A."/>
            <person name="Raymond C.K."/>
            <person name="Reichwald K."/>
            <person name="Rodriguez J."/>
            <person name="Sasaki T."/>
            <person name="Schilhabel M."/>
            <person name="Siddiqui R."/>
            <person name="Smith C.L."/>
            <person name="Sneddon T.P."/>
            <person name="Talamas J.A."/>
            <person name="Tenzin P."/>
            <person name="Topham K."/>
            <person name="Venkataraman V."/>
            <person name="Wen G."/>
            <person name="Yamazaki S."/>
            <person name="Young S.K."/>
            <person name="Zeng Q."/>
            <person name="Zimmer A.R."/>
            <person name="Rosenthal A."/>
            <person name="Birren B.W."/>
            <person name="Platzer M."/>
            <person name="Shimizu N."/>
            <person name="Lander E.S."/>
        </authorList>
    </citation>
    <scope>NUCLEOTIDE SEQUENCE [LARGE SCALE GENOMIC DNA]</scope>
</reference>
<reference key="5">
    <citation type="submission" date="2004-01" db="EMBL/GenBank/DDBJ databases">
        <title>SEREX-defined rhabdomyosarcoma antigens.</title>
        <authorList>
            <person name="Behrends U."/>
            <person name="Gotz C."/>
            <person name="Mautner J."/>
        </authorList>
    </citation>
    <scope>NUCLEOTIDE SEQUENCE [MRNA] OF 276-853</scope>
    <source>
        <tissue>Rhabdomyosarcoma</tissue>
    </source>
</reference>
<reference key="6">
    <citation type="journal article" date="2004" name="Genome Res.">
        <title>The status, quality, and expansion of the NIH full-length cDNA project: the Mammalian Gene Collection (MGC).</title>
        <authorList>
            <consortium name="The MGC Project Team"/>
        </authorList>
    </citation>
    <scope>NUCLEOTIDE SEQUENCE [LARGE SCALE MRNA] OF 574-853</scope>
    <source>
        <tissue>Urinary bladder</tissue>
    </source>
</reference>
<reference key="7">
    <citation type="journal article" date="2004" name="Nat. Genet.">
        <title>Complete sequencing and characterization of 21,243 full-length human cDNAs.</title>
        <authorList>
            <person name="Ota T."/>
            <person name="Suzuki Y."/>
            <person name="Nishikawa T."/>
            <person name="Otsuki T."/>
            <person name="Sugiyama T."/>
            <person name="Irie R."/>
            <person name="Wakamatsu A."/>
            <person name="Hayashi K."/>
            <person name="Sato H."/>
            <person name="Nagai K."/>
            <person name="Kimura K."/>
            <person name="Makita H."/>
            <person name="Sekine M."/>
            <person name="Obayashi M."/>
            <person name="Nishi T."/>
            <person name="Shibahara T."/>
            <person name="Tanaka T."/>
            <person name="Ishii S."/>
            <person name="Yamamoto J."/>
            <person name="Saito K."/>
            <person name="Kawai Y."/>
            <person name="Isono Y."/>
            <person name="Nakamura Y."/>
            <person name="Nagahari K."/>
            <person name="Murakami K."/>
            <person name="Yasuda T."/>
            <person name="Iwayanagi T."/>
            <person name="Wagatsuma M."/>
            <person name="Shiratori A."/>
            <person name="Sudo H."/>
            <person name="Hosoiri T."/>
            <person name="Kaku Y."/>
            <person name="Kodaira H."/>
            <person name="Kondo H."/>
            <person name="Sugawara M."/>
            <person name="Takahashi M."/>
            <person name="Kanda K."/>
            <person name="Yokoi T."/>
            <person name="Furuya T."/>
            <person name="Kikkawa E."/>
            <person name="Omura Y."/>
            <person name="Abe K."/>
            <person name="Kamihara K."/>
            <person name="Katsuta N."/>
            <person name="Sato K."/>
            <person name="Tanikawa M."/>
            <person name="Yamazaki M."/>
            <person name="Ninomiya K."/>
            <person name="Ishibashi T."/>
            <person name="Yamashita H."/>
            <person name="Murakawa K."/>
            <person name="Fujimori K."/>
            <person name="Tanai H."/>
            <person name="Kimata M."/>
            <person name="Watanabe M."/>
            <person name="Hiraoka S."/>
            <person name="Chiba Y."/>
            <person name="Ishida S."/>
            <person name="Ono Y."/>
            <person name="Takiguchi S."/>
            <person name="Watanabe S."/>
            <person name="Yosida M."/>
            <person name="Hotuta T."/>
            <person name="Kusano J."/>
            <person name="Kanehori K."/>
            <person name="Takahashi-Fujii A."/>
            <person name="Hara H."/>
            <person name="Tanase T.-O."/>
            <person name="Nomura Y."/>
            <person name="Togiya S."/>
            <person name="Komai F."/>
            <person name="Hara R."/>
            <person name="Takeuchi K."/>
            <person name="Arita M."/>
            <person name="Imose N."/>
            <person name="Musashino K."/>
            <person name="Yuuki H."/>
            <person name="Oshima A."/>
            <person name="Sasaki N."/>
            <person name="Aotsuka S."/>
            <person name="Yoshikawa Y."/>
            <person name="Matsunawa H."/>
            <person name="Ichihara T."/>
            <person name="Shiohata N."/>
            <person name="Sano S."/>
            <person name="Moriya S."/>
            <person name="Momiyama H."/>
            <person name="Satoh N."/>
            <person name="Takami S."/>
            <person name="Terashima Y."/>
            <person name="Suzuki O."/>
            <person name="Nakagawa S."/>
            <person name="Senoh A."/>
            <person name="Mizoguchi H."/>
            <person name="Goto Y."/>
            <person name="Shimizu F."/>
            <person name="Wakebe H."/>
            <person name="Hishigaki H."/>
            <person name="Watanabe T."/>
            <person name="Sugiyama A."/>
            <person name="Takemoto M."/>
            <person name="Kawakami B."/>
            <person name="Yamazaki M."/>
            <person name="Watanabe K."/>
            <person name="Kumagai A."/>
            <person name="Itakura S."/>
            <person name="Fukuzumi Y."/>
            <person name="Fujimori Y."/>
            <person name="Komiyama M."/>
            <person name="Tashiro H."/>
            <person name="Tanigami A."/>
            <person name="Fujiwara T."/>
            <person name="Ono T."/>
            <person name="Yamada K."/>
            <person name="Fujii Y."/>
            <person name="Ozaki K."/>
            <person name="Hirao M."/>
            <person name="Ohmori Y."/>
            <person name="Kawabata A."/>
            <person name="Hikiji T."/>
            <person name="Kobatake N."/>
            <person name="Inagaki H."/>
            <person name="Ikema Y."/>
            <person name="Okamoto S."/>
            <person name="Okitani R."/>
            <person name="Kawakami T."/>
            <person name="Noguchi S."/>
            <person name="Itoh T."/>
            <person name="Shigeta K."/>
            <person name="Senba T."/>
            <person name="Matsumura K."/>
            <person name="Nakajima Y."/>
            <person name="Mizuno T."/>
            <person name="Morinaga M."/>
            <person name="Sasaki M."/>
            <person name="Togashi T."/>
            <person name="Oyama M."/>
            <person name="Hata H."/>
            <person name="Watanabe M."/>
            <person name="Komatsu T."/>
            <person name="Mizushima-Sugano J."/>
            <person name="Satoh T."/>
            <person name="Shirai Y."/>
            <person name="Takahashi Y."/>
            <person name="Nakagawa K."/>
            <person name="Okumura K."/>
            <person name="Nagase T."/>
            <person name="Nomura N."/>
            <person name="Kikuchi H."/>
            <person name="Masuho Y."/>
            <person name="Yamashita R."/>
            <person name="Nakai K."/>
            <person name="Yada T."/>
            <person name="Nakamura Y."/>
            <person name="Ohara O."/>
            <person name="Isogai T."/>
            <person name="Sugano S."/>
        </authorList>
    </citation>
    <scope>NUCLEOTIDE SEQUENCE [LARGE SCALE MRNA] OF 629-853</scope>
</reference>
<reference key="8">
    <citation type="journal article" date="2002" name="EMBO J.">
        <title>Mammalian and yeast U3 snoRNPs are matured in specific and related nuclear compartments.</title>
        <authorList>
            <person name="Verheggen C."/>
            <person name="Lafontaine D.L.J."/>
            <person name="Samarsky D."/>
            <person name="Mouaikel J."/>
            <person name="Blanchard J.-M."/>
            <person name="Bordonne R."/>
            <person name="Bertrand E."/>
        </authorList>
    </citation>
    <scope>SUBCELLULAR LOCATION</scope>
</reference>
<reference key="9">
    <citation type="journal article" date="2002" name="J. Biol. Chem.">
        <title>Interaction of PIMT with transcriptional coactivators CBP, p300, and PBP differential role in transcriptional regulation.</title>
        <authorList>
            <person name="Misra P."/>
            <person name="Qi C."/>
            <person name="Yu S."/>
            <person name="Shah S.H."/>
            <person name="Cao W.Q."/>
            <person name="Rao M.S."/>
            <person name="Thimmapaya B."/>
            <person name="Zhu Y."/>
            <person name="Reddy J.K."/>
        </authorList>
    </citation>
    <scope>FUNCTION</scope>
    <scope>INTERACTION WITH CREBBP; EP300 AND PPARBP</scope>
</reference>
<reference key="10">
    <citation type="journal article" date="2003" name="Biochem. Biophys. Res. Commun.">
        <title>Different isoforms of PRIP-interacting protein with methyltransferase domain/trimethylguanosine synthase localize to the cytoplasm and nucleus.</title>
        <authorList>
            <person name="Enuenlue I."/>
            <person name="Papai G."/>
            <person name="Cserpan I."/>
            <person name="Udvardy A."/>
            <person name="Jeang K.-T."/>
            <person name="Boros I."/>
        </authorList>
    </citation>
    <scope>INTERACTION WITH EED</scope>
    <scope>SUBCELLULAR LOCATION</scope>
</reference>
<reference key="11">
    <citation type="journal article" date="2003" name="EMBO Rep.">
        <title>Interaction between the small-nuclear-RNA cap hypermethylase and the spinal muscular atrophy protein, survival of motor neuron.</title>
        <authorList>
            <person name="Mouaikel J."/>
            <person name="Narayanan U."/>
            <person name="Verheggen C."/>
            <person name="Matera A.G."/>
            <person name="Bertrand E."/>
            <person name="Tazi J."/>
            <person name="Bordonne R."/>
        </authorList>
    </citation>
    <scope>INTERACTION WITH SMN</scope>
</reference>
<reference key="12">
    <citation type="journal article" date="2006" name="Mol. Biol. Cell">
        <title>Ongoing U snRNP biogenesis is required for the integrity of Cajal bodies.</title>
        <authorList>
            <person name="Lemm I."/>
            <person name="Girard C."/>
            <person name="Kuhn A.N."/>
            <person name="Watkins N.J."/>
            <person name="Schneider M."/>
            <person name="Bordonne R."/>
            <person name="Luehrmann R."/>
        </authorList>
    </citation>
    <scope>FUNCTION</scope>
</reference>
<reference key="13">
    <citation type="journal article" date="2008" name="J. Biol. Chem.">
        <title>Genetic and biochemical analysis of yeast and human cap trimethylguanosine synthase: functional overlap of 2,2,7-trimethylguanosine caps, small nuclear ribonucleoprotein components, pre-mRNA splicing factors, and RNA decay pathways.</title>
        <authorList>
            <person name="Hausmann S."/>
            <person name="Zheng S."/>
            <person name="Costanzo M."/>
            <person name="Brost R.L."/>
            <person name="Garcin D."/>
            <person name="Boone C."/>
            <person name="Shuman S."/>
            <person name="Schwer B."/>
        </authorList>
    </citation>
    <scope>FUNCTION</scope>
    <scope>CATALYTIC ACTIVITY</scope>
    <scope>BIOPHYSICOCHEMICAL PROPERTIES</scope>
    <scope>MUTAGENESIS OF PHE-655; THR-673; ASP-696; ASN-704; ASP-719; ASN-731; SER-763; TRP-766; ARG-807 AND ASN-808</scope>
</reference>
<reference key="14">
    <citation type="journal article" date="2008" name="Proc. Natl. Acad. Sci. U.S.A.">
        <title>A quantitative atlas of mitotic phosphorylation.</title>
        <authorList>
            <person name="Dephoure N."/>
            <person name="Zhou C."/>
            <person name="Villen J."/>
            <person name="Beausoleil S.A."/>
            <person name="Bakalarski C.E."/>
            <person name="Elledge S.J."/>
            <person name="Gygi S.P."/>
        </authorList>
    </citation>
    <scope>PHOSPHORYLATION [LARGE SCALE ANALYSIS] AT SER-55; THR-60; SER-154 AND SER-438</scope>
    <scope>IDENTIFICATION BY MASS SPECTROMETRY [LARGE SCALE ANALYSIS]</scope>
    <source>
        <tissue>Cervix carcinoma</tissue>
    </source>
</reference>
<reference key="15">
    <citation type="journal article" date="2009" name="Anal. Chem.">
        <title>Lys-N and trypsin cover complementary parts of the phosphoproteome in a refined SCX-based approach.</title>
        <authorList>
            <person name="Gauci S."/>
            <person name="Helbig A.O."/>
            <person name="Slijper M."/>
            <person name="Krijgsveld J."/>
            <person name="Heck A.J."/>
            <person name="Mohammed S."/>
        </authorList>
    </citation>
    <scope>IDENTIFICATION BY MASS SPECTROMETRY [LARGE SCALE ANALYSIS]</scope>
</reference>
<reference key="16">
    <citation type="journal article" date="2009" name="Sci. Signal.">
        <title>Quantitative phosphoproteomic analysis of T cell receptor signaling reveals system-wide modulation of protein-protein interactions.</title>
        <authorList>
            <person name="Mayya V."/>
            <person name="Lundgren D.H."/>
            <person name="Hwang S.-I."/>
            <person name="Rezaul K."/>
            <person name="Wu L."/>
            <person name="Eng J.K."/>
            <person name="Rodionov V."/>
            <person name="Han D.K."/>
        </authorList>
    </citation>
    <scope>PHOSPHORYLATION [LARGE SCALE ANALYSIS] AT SER-55; THR-60; SER-89; SER-154 AND SER-438</scope>
    <scope>IDENTIFICATION BY MASS SPECTROMETRY [LARGE SCALE ANALYSIS]</scope>
    <source>
        <tissue>Leukemic T-cell</tissue>
    </source>
</reference>
<reference key="17">
    <citation type="journal article" date="2010" name="Sci. Signal.">
        <title>Quantitative phosphoproteomics reveals widespread full phosphorylation site occupancy during mitosis.</title>
        <authorList>
            <person name="Olsen J.V."/>
            <person name="Vermeulen M."/>
            <person name="Santamaria A."/>
            <person name="Kumar C."/>
            <person name="Miller M.L."/>
            <person name="Jensen L.J."/>
            <person name="Gnad F."/>
            <person name="Cox J."/>
            <person name="Jensen T.S."/>
            <person name="Nigg E.A."/>
            <person name="Brunak S."/>
            <person name="Mann M."/>
        </authorList>
    </citation>
    <scope>PHOSPHORYLATION [LARGE SCALE ANALYSIS] AT SER-85 AND SER-89</scope>
    <scope>IDENTIFICATION BY MASS SPECTROMETRY [LARGE SCALE ANALYSIS]</scope>
    <source>
        <tissue>Cervix carcinoma</tissue>
    </source>
</reference>
<reference key="18">
    <citation type="journal article" date="2011" name="Sci. Signal.">
        <title>System-wide temporal characterization of the proteome and phosphoproteome of human embryonic stem cell differentiation.</title>
        <authorList>
            <person name="Rigbolt K.T."/>
            <person name="Prokhorova T.A."/>
            <person name="Akimov V."/>
            <person name="Henningsen J."/>
            <person name="Johansen P.T."/>
            <person name="Kratchmarova I."/>
            <person name="Kassem M."/>
            <person name="Mann M."/>
            <person name="Olsen J.V."/>
            <person name="Blagoev B."/>
        </authorList>
    </citation>
    <scope>PHOSPHORYLATION [LARGE SCALE ANALYSIS] AT SER-89</scope>
    <scope>IDENTIFICATION BY MASS SPECTROMETRY [LARGE SCALE ANALYSIS]</scope>
</reference>
<reference key="19">
    <citation type="journal article" date="2013" name="J. Proteome Res.">
        <title>Toward a comprehensive characterization of a human cancer cell phosphoproteome.</title>
        <authorList>
            <person name="Zhou H."/>
            <person name="Di Palma S."/>
            <person name="Preisinger C."/>
            <person name="Peng M."/>
            <person name="Polat A.N."/>
            <person name="Heck A.J."/>
            <person name="Mohammed S."/>
        </authorList>
    </citation>
    <scope>PHOSPHORYLATION [LARGE SCALE ANALYSIS] AT SER-55; SER-85; SER-89; SER-96; SER-141; TYR-146; SER-154; SER-189; SER-412 AND SER-578</scope>
    <scope>IDENTIFICATION BY MASS SPECTROMETRY [LARGE SCALE ANALYSIS]</scope>
    <source>
        <tissue>Cervix carcinoma</tissue>
        <tissue>Erythroleukemia</tissue>
    </source>
</reference>
<reference key="20">
    <citation type="journal article" date="2009" name="Acta Crystallogr. D">
        <title>Structure analysis of the conserved methyltransferase domain of human trimethylguanosine synthase TGS1.</title>
        <authorList>
            <person name="Monecke T."/>
            <person name="Dickmanns A."/>
            <person name="Strasser A."/>
            <person name="Ficner R."/>
        </authorList>
    </citation>
    <scope>X-RAY CRYSTALLOGRAPHY (2.21 ANGSTROMS) OF 653-853</scope>
</reference>
<reference key="21">
    <citation type="journal article" date="2009" name="Nucleic Acids Res.">
        <title>Structural basis for m7G-cap hypermethylation of small nuclear, small nucleolar and telomerase RNA by the dimethyltransferase TGS1.</title>
        <authorList>
            <person name="Monecke T."/>
            <person name="Dickmanns A."/>
            <person name="Ficner R."/>
        </authorList>
    </citation>
    <scope>X-RAY CRYSTALLOGRAPHY (2.0 ANGSTROMS) OF 618-853 IN COMPLEX WITH 7-METHYLGUANOSINE AND S-ADENOSYL-L-HOMOCYSTEINE</scope>
    <scope>MUTAGENESIS OF SER-763 AND TRP-766</scope>
</reference>
<gene>
    <name type="primary">TGS1</name>
    <name type="synonym">HCA137</name>
    <name type="synonym">NCOA6IP</name>
    <name type="synonym">PIMT</name>
</gene>
<evidence type="ECO:0000250" key="1"/>
<evidence type="ECO:0000256" key="2">
    <source>
        <dbReference type="SAM" id="MobiDB-lite"/>
    </source>
</evidence>
<evidence type="ECO:0000269" key="3">
    <source>
    </source>
</evidence>
<evidence type="ECO:0000269" key="4">
    <source>
    </source>
</evidence>
<evidence type="ECO:0000269" key="5">
    <source>
    </source>
</evidence>
<evidence type="ECO:0000269" key="6">
    <source>
    </source>
</evidence>
<evidence type="ECO:0000269" key="7">
    <source>
    </source>
</evidence>
<evidence type="ECO:0000269" key="8">
    <source>
    </source>
</evidence>
<evidence type="ECO:0000269" key="9">
    <source>
    </source>
</evidence>
<evidence type="ECO:0000269" key="10">
    <source>
    </source>
</evidence>
<evidence type="ECO:0000269" key="11">
    <source>
    </source>
</evidence>
<evidence type="ECO:0000269" key="12">
    <source>
    </source>
</evidence>
<evidence type="ECO:0000305" key="13"/>
<evidence type="ECO:0000305" key="14">
    <source>
    </source>
</evidence>
<evidence type="ECO:0007744" key="15">
    <source>
    </source>
</evidence>
<evidence type="ECO:0007744" key="16">
    <source>
    </source>
</evidence>
<evidence type="ECO:0007744" key="17">
    <source>
    </source>
</evidence>
<evidence type="ECO:0007744" key="18">
    <source>
    </source>
</evidence>
<evidence type="ECO:0007744" key="19">
    <source>
    </source>
</evidence>
<evidence type="ECO:0007829" key="20">
    <source>
        <dbReference type="PDB" id="3EGI"/>
    </source>
</evidence>
<evidence type="ECO:0007829" key="21">
    <source>
        <dbReference type="PDB" id="3GDH"/>
    </source>
</evidence>
<feature type="chain" id="PRO_0000204468" description="Trimethylguanosine synthase">
    <location>
        <begin position="1"/>
        <end position="853"/>
    </location>
</feature>
<feature type="region of interest" description="Disordered" evidence="2">
    <location>
        <begin position="53"/>
        <end position="80"/>
    </location>
</feature>
<feature type="region of interest" description="Disordered" evidence="2">
    <location>
        <begin position="149"/>
        <end position="187"/>
    </location>
</feature>
<feature type="region of interest" description="Disordered" evidence="2">
    <location>
        <begin position="334"/>
        <end position="461"/>
    </location>
</feature>
<feature type="region of interest" description="Disordered" evidence="2">
    <location>
        <begin position="527"/>
        <end position="632"/>
    </location>
</feature>
<feature type="region of interest" description="Sufficient for catalytic activity">
    <location>
        <begin position="631"/>
        <end position="846"/>
    </location>
</feature>
<feature type="compositionally biased region" description="Polar residues" evidence="2">
    <location>
        <begin position="156"/>
        <end position="171"/>
    </location>
</feature>
<feature type="compositionally biased region" description="Low complexity" evidence="2">
    <location>
        <begin position="367"/>
        <end position="382"/>
    </location>
</feature>
<feature type="compositionally biased region" description="Acidic residues" evidence="2">
    <location>
        <begin position="431"/>
        <end position="442"/>
    </location>
</feature>
<feature type="compositionally biased region" description="Polar residues" evidence="2">
    <location>
        <begin position="564"/>
        <end position="578"/>
    </location>
</feature>
<feature type="compositionally biased region" description="Basic and acidic residues" evidence="2">
    <location>
        <begin position="608"/>
        <end position="619"/>
    </location>
</feature>
<feature type="compositionally biased region" description="Basic residues" evidence="2">
    <location>
        <begin position="620"/>
        <end position="630"/>
    </location>
</feature>
<feature type="binding site" evidence="1">
    <location>
        <position position="719"/>
    </location>
    <ligand>
        <name>S-adenosyl-L-methionine</name>
        <dbReference type="ChEBI" id="CHEBI:59789"/>
    </ligand>
</feature>
<feature type="binding site" evidence="12">
    <location>
        <position position="766"/>
    </location>
    <ligand>
        <name>N(7)-methylguanosine</name>
        <dbReference type="ChEBI" id="CHEBI:20794"/>
    </ligand>
</feature>
<feature type="modified residue" description="Phosphoserine" evidence="15 16 19">
    <location>
        <position position="55"/>
    </location>
</feature>
<feature type="modified residue" description="Phosphothreonine" evidence="15 16">
    <location>
        <position position="60"/>
    </location>
</feature>
<feature type="modified residue" description="Phosphoserine" evidence="17 19">
    <location>
        <position position="85"/>
    </location>
</feature>
<feature type="modified residue" description="Phosphoserine" evidence="16 17 18 19">
    <location>
        <position position="89"/>
    </location>
</feature>
<feature type="modified residue" description="Phosphoserine" evidence="19">
    <location>
        <position position="96"/>
    </location>
</feature>
<feature type="modified residue" description="Phosphoserine" evidence="19">
    <location>
        <position position="141"/>
    </location>
</feature>
<feature type="modified residue" description="Phosphotyrosine" evidence="19">
    <location>
        <position position="146"/>
    </location>
</feature>
<feature type="modified residue" description="Phosphoserine" evidence="15 16 19">
    <location>
        <position position="154"/>
    </location>
</feature>
<feature type="modified residue" description="Phosphoserine" evidence="19">
    <location>
        <position position="189"/>
    </location>
</feature>
<feature type="modified residue" description="Phosphoserine" evidence="19">
    <location>
        <position position="412"/>
    </location>
</feature>
<feature type="modified residue" description="Phosphoserine" evidence="15 16">
    <location>
        <position position="438"/>
    </location>
</feature>
<feature type="modified residue" description="Phosphoserine" evidence="19">
    <location>
        <position position="578"/>
    </location>
</feature>
<feature type="sequence variant" id="VAR_024734" description="In dbSNP:rs1818." evidence="3 6 7">
    <original>I</original>
    <variation>T</variation>
    <location>
        <position position="16"/>
    </location>
</feature>
<feature type="sequence variant" id="VAR_024735" description="In dbSNP:rs3213971.">
    <original>I</original>
    <variation>V</variation>
    <location>
        <position position="160"/>
    </location>
</feature>
<feature type="sequence variant" id="VAR_056241" description="In dbSNP:rs11986329.">
    <original>P</original>
    <variation>S</variation>
    <location>
        <position position="299"/>
    </location>
</feature>
<feature type="sequence variant" id="VAR_024736" description="In dbSNP:rs10100659.">
    <original>I</original>
    <variation>T</variation>
    <location>
        <position position="511"/>
    </location>
</feature>
<feature type="sequence variant" id="VAR_024737" description="In dbSNP:rs16922259.">
    <original>V</original>
    <variation>I</variation>
    <location>
        <position position="576"/>
    </location>
</feature>
<feature type="sequence variant" id="VAR_056242" description="In dbSNP:rs10109493.">
    <original>T</original>
    <variation>A</variation>
    <location>
        <position position="595"/>
    </location>
</feature>
<feature type="sequence variant" id="VAR_024738" description="In dbSNP:rs7823773.">
    <original>F</original>
    <variation>C</variation>
    <location>
        <position position="754"/>
    </location>
</feature>
<feature type="mutagenesis site" description="Loss of catalytic activity." evidence="11">
    <original>F</original>
    <variation>A</variation>
    <location>
        <position position="655"/>
    </location>
</feature>
<feature type="mutagenesis site" description="Decreases catalytic activity to 13 percent of wild type." evidence="11">
    <original>T</original>
    <variation>A</variation>
    <location>
        <position position="673"/>
    </location>
</feature>
<feature type="mutagenesis site" description="Loss of catalytic activity." evidence="11">
    <original>D</original>
    <variation>A</variation>
    <location>
        <position position="696"/>
    </location>
</feature>
<feature type="mutagenesis site" description="Decreases catalytic activity to 5 percent of wild type." evidence="11">
    <original>N</original>
    <variation>A</variation>
    <location>
        <position position="704"/>
    </location>
</feature>
<feature type="mutagenesis site" description="Loss of catalytic activity." evidence="11">
    <original>D</original>
    <variation>A</variation>
    <location>
        <position position="719"/>
    </location>
</feature>
<feature type="mutagenesis site" description="Decreases catalytic activity to 4 percent of wild type." evidence="11">
    <original>N</original>
    <variation>A</variation>
    <location>
        <position position="731"/>
    </location>
</feature>
<feature type="mutagenesis site" description="Decreases catalytic activity to 26 percent of wild type." evidence="11 12">
    <original>S</original>
    <variation>A</variation>
    <location>
        <position position="763"/>
    </location>
</feature>
<feature type="mutagenesis site" description="Loss of catalytic activity." evidence="11 12">
    <original>W</original>
    <variation>A</variation>
    <location>
        <position position="766"/>
    </location>
</feature>
<feature type="mutagenesis site" description="Decreases catalytic activity to 6 percent of wild type." evidence="11">
    <original>R</original>
    <variation>A</variation>
    <location>
        <position position="807"/>
    </location>
</feature>
<feature type="mutagenesis site" description="Decreases catalytic activity to 11 percent of wild type." evidence="11">
    <original>N</original>
    <variation>A</variation>
    <location>
        <position position="808"/>
    </location>
</feature>
<feature type="sequence conflict" description="In Ref. 1; AAK27730." evidence="13" ref="1">
    <location>
        <position position="566"/>
    </location>
</feature>
<feature type="sequence conflict" description="In Ref. 3; AAK83025." evidence="13" ref="3">
    <original>N</original>
    <variation>T</variation>
    <location>
        <position position="624"/>
    </location>
</feature>
<feature type="sequence conflict" description="In Ref. 3; AAK83025." evidence="13" ref="3">
    <original>N</original>
    <variation>T</variation>
    <location>
        <position position="628"/>
    </location>
</feature>
<feature type="sequence conflict" description="In Ref. 1; AAK27730." evidence="13" ref="1">
    <original>I</original>
    <variation>F</variation>
    <location>
        <position position="681"/>
    </location>
</feature>
<feature type="sequence conflict" description="In Ref. 2; AAL99922." evidence="13" ref="2">
    <original>Y</original>
    <variation>H</variation>
    <location>
        <position position="771"/>
    </location>
</feature>
<feature type="helix" evidence="21">
    <location>
        <begin position="636"/>
        <end position="640"/>
    </location>
</feature>
<feature type="helix" evidence="21">
    <location>
        <begin position="642"/>
        <end position="644"/>
    </location>
</feature>
<feature type="helix" evidence="21">
    <location>
        <begin position="645"/>
        <end position="649"/>
    </location>
</feature>
<feature type="helix" evidence="21">
    <location>
        <begin position="651"/>
        <end position="654"/>
    </location>
</feature>
<feature type="helix" evidence="21">
    <location>
        <begin position="658"/>
        <end position="660"/>
    </location>
</feature>
<feature type="helix" evidence="21">
    <location>
        <begin position="666"/>
        <end position="671"/>
    </location>
</feature>
<feature type="helix" evidence="21">
    <location>
        <begin position="675"/>
        <end position="688"/>
    </location>
</feature>
<feature type="strand" evidence="21">
    <location>
        <begin position="692"/>
        <end position="696"/>
    </location>
</feature>
<feature type="helix" evidence="21">
    <location>
        <begin position="703"/>
        <end position="710"/>
    </location>
</feature>
<feature type="strand" evidence="21">
    <location>
        <begin position="714"/>
        <end position="720"/>
    </location>
</feature>
<feature type="helix" evidence="21">
    <location>
        <begin position="722"/>
        <end position="734"/>
    </location>
</feature>
<feature type="helix" evidence="21">
    <location>
        <begin position="738"/>
        <end position="740"/>
    </location>
</feature>
<feature type="strand" evidence="21">
    <location>
        <begin position="741"/>
        <end position="746"/>
    </location>
</feature>
<feature type="helix" evidence="21">
    <location>
        <begin position="748"/>
        <end position="751"/>
    </location>
</feature>
<feature type="helix" evidence="21">
    <location>
        <begin position="752"/>
        <end position="754"/>
    </location>
</feature>
<feature type="strand" evidence="21">
    <location>
        <begin position="758"/>
        <end position="762"/>
    </location>
</feature>
<feature type="helix" evidence="21">
    <location>
        <begin position="769"/>
        <end position="773"/>
    </location>
</feature>
<feature type="strand" evidence="21">
    <location>
        <begin position="774"/>
        <end position="777"/>
    </location>
</feature>
<feature type="turn" evidence="21">
    <location>
        <begin position="779"/>
        <end position="781"/>
    </location>
</feature>
<feature type="strand" evidence="20">
    <location>
        <begin position="782"/>
        <end position="785"/>
    </location>
</feature>
<feature type="helix" evidence="21">
    <location>
        <begin position="787"/>
        <end position="797"/>
    </location>
</feature>
<feature type="strand" evidence="21">
    <location>
        <begin position="801"/>
        <end position="806"/>
    </location>
</feature>
<feature type="helix" evidence="21">
    <location>
        <begin position="811"/>
        <end position="816"/>
    </location>
</feature>
<feature type="strand" evidence="21">
    <location>
        <begin position="824"/>
        <end position="831"/>
    </location>
</feature>
<feature type="strand" evidence="21">
    <location>
        <begin position="834"/>
        <end position="842"/>
    </location>
</feature>
<feature type="helix" evidence="20">
    <location>
        <begin position="843"/>
        <end position="845"/>
    </location>
</feature>
<name>TGS1_HUMAN</name>
<comment type="function">
    <text evidence="3 4 10 11">Catalyzes the 2 serial methylation steps for the conversion of the 7-monomethylguanosine (m(7)G) caps of snRNAs and snoRNAs to a 2,2,7-trimethylguanosine (m(2,2,7)G) cap structure. The enzyme is specific for guanine, and N7 methylation must precede N2 methylation. Hypermethylation of the m7G cap of U snRNAs leads to their concentration in nuclear foci, their colocalization with coilin and the formation of canonical Cajal bodies (CBs). Plays a role in transcriptional regulation.</text>
</comment>
<comment type="catalytic activity">
    <reaction evidence="11">
        <text>a 5'-end (N(7)-methyl 5'-triphosphoguanosine)-ribonucleoside in snRNA + S-adenosyl-L-methionine = a 5'-end (N(2),N(7)-dimethyl 5'-triphosphoguanosine)-ribonucleoside in snRNA + S-adenosyl-L-homocysteine + H(+)</text>
        <dbReference type="Rhea" id="RHEA:78471"/>
        <dbReference type="Rhea" id="RHEA-COMP:19085"/>
        <dbReference type="Rhea" id="RHEA-COMP:19087"/>
        <dbReference type="ChEBI" id="CHEBI:15378"/>
        <dbReference type="ChEBI" id="CHEBI:57856"/>
        <dbReference type="ChEBI" id="CHEBI:59789"/>
        <dbReference type="ChEBI" id="CHEBI:156461"/>
        <dbReference type="ChEBI" id="CHEBI:172880"/>
    </reaction>
    <physiologicalReaction direction="left-to-right" evidence="11">
        <dbReference type="Rhea" id="RHEA:78472"/>
    </physiologicalReaction>
</comment>
<comment type="catalytic activity">
    <reaction evidence="11">
        <text>a 5'-end (N(7)-methyl 5'-triphosphoguanosine)-ribonucleoside in snoRNA + S-adenosyl-L-methionine = a 5'-end (N(2),N(7)-dimethyl 5'-triphosphoguanosine)-ribonucleoside in snoRNA + S-adenosyl-L-homocysteine + H(+)</text>
        <dbReference type="Rhea" id="RHEA:78475"/>
        <dbReference type="Rhea" id="RHEA-COMP:19086"/>
        <dbReference type="Rhea" id="RHEA-COMP:19088"/>
        <dbReference type="ChEBI" id="CHEBI:15378"/>
        <dbReference type="ChEBI" id="CHEBI:57856"/>
        <dbReference type="ChEBI" id="CHEBI:59789"/>
        <dbReference type="ChEBI" id="CHEBI:156461"/>
        <dbReference type="ChEBI" id="CHEBI:172880"/>
    </reaction>
    <physiologicalReaction direction="left-to-right" evidence="11">
        <dbReference type="Rhea" id="RHEA:78476"/>
    </physiologicalReaction>
</comment>
<comment type="catalytic activity">
    <reaction evidence="11">
        <text>a 5'-end (N(2),N(7)-dimethyl 5'-triphosphoguanosine)-ribonucleoside in snRNA + S-adenosyl-L-methionine = a 5'-end (N(2),N(2),N(7)-trimethyl 5'-triphosphoguanosine)-ribonucleoside in snRNA + S-adenosyl-L-homocysteine + H(+)</text>
        <dbReference type="Rhea" id="RHEA:78479"/>
        <dbReference type="Rhea" id="RHEA-COMP:19087"/>
        <dbReference type="Rhea" id="RHEA-COMP:19089"/>
        <dbReference type="ChEBI" id="CHEBI:15378"/>
        <dbReference type="ChEBI" id="CHEBI:57856"/>
        <dbReference type="ChEBI" id="CHEBI:59789"/>
        <dbReference type="ChEBI" id="CHEBI:167623"/>
        <dbReference type="ChEBI" id="CHEBI:172880"/>
    </reaction>
    <physiologicalReaction direction="left-to-right" evidence="11">
        <dbReference type="Rhea" id="RHEA:78480"/>
    </physiologicalReaction>
</comment>
<comment type="catalytic activity">
    <reaction evidence="11">
        <text>a 5'-end (N(2),N(7)-dimethyl 5'-triphosphoguanosine)-ribonucleoside in snoRNA + S-adenosyl-L-methionine = a 5'-end (N(2),N(2),N(7)-trimethyl 5'-triphosphoguanosine)-ribonucleoside in snoRNA + S-adenosyl-L-homocysteine + H(+)</text>
        <dbReference type="Rhea" id="RHEA:78507"/>
        <dbReference type="Rhea" id="RHEA-COMP:19088"/>
        <dbReference type="Rhea" id="RHEA-COMP:19090"/>
        <dbReference type="ChEBI" id="CHEBI:15378"/>
        <dbReference type="ChEBI" id="CHEBI:57856"/>
        <dbReference type="ChEBI" id="CHEBI:59789"/>
        <dbReference type="ChEBI" id="CHEBI:167623"/>
        <dbReference type="ChEBI" id="CHEBI:172880"/>
    </reaction>
    <physiologicalReaction direction="left-to-right" evidence="11">
        <dbReference type="Rhea" id="RHEA:78508"/>
    </physiologicalReaction>
</comment>
<comment type="biophysicochemical properties">
    <kinetics>
        <KM evidence="11">30 uM for m(7)GDP</KM>
        <KM evidence="11">5 uM for S-adenosyl-L-methionine</KM>
    </kinetics>
    <phDependence>
        <text evidence="11">Optimum pH is 8.5-9.5.</text>
    </phDependence>
</comment>
<comment type="subunit">
    <text evidence="3 4 8 9 12">May form homooligomers. Interacts with CREBBP/CBP, EED/WAIT1, EP300/P300, NCOA6/PRIP, PPARBP/PBP and SMN.</text>
</comment>
<comment type="interaction">
    <interactant intactId="EBI-949244">
        <id>Q96RS0</id>
    </interactant>
    <interactant intactId="EBI-358318">
        <id>P22087</id>
        <label>FBL</label>
    </interactant>
    <organismsDiffer>false</organismsDiffer>
    <experiments>5</experiments>
</comment>
<comment type="interaction">
    <interactant intactId="EBI-949244">
        <id>Q96RS0</id>
    </interactant>
    <interactant intactId="EBI-395469">
        <id>Q9Y2X3</id>
        <label>NOP58</label>
    </interactant>
    <organismsDiffer>false</organismsDiffer>
    <experiments>3</experiments>
</comment>
<comment type="interaction">
    <interactant intactId="EBI-949244">
        <id>Q96RS0</id>
    </interactant>
    <interactant intactId="EBI-12025760">
        <id>Q86UR1-2</id>
        <label>NOXA1</label>
    </interactant>
    <organismsDiffer>false</organismsDiffer>
    <experiments>3</experiments>
</comment>
<comment type="interaction">
    <interactant intactId="EBI-949244">
        <id>Q96RS0</id>
    </interactant>
    <interactant intactId="EBI-7254550">
        <id>P36508</id>
        <label>ZNF76</label>
    </interactant>
    <organismsDiffer>false</organismsDiffer>
    <experiments>3</experiments>
</comment>
<comment type="subcellular location">
    <subcellularLocation>
        <location evidence="9">Cytoplasm</location>
    </subcellularLocation>
    <subcellularLocation>
        <location evidence="14">Nucleus</location>
        <location evidence="14">Cajal body</location>
    </subcellularLocation>
    <subcellularLocation>
        <location evidence="5">Nucleus</location>
        <location evidence="5">Nucleolus</location>
    </subcellularLocation>
    <text evidence="9">A 90 kDa isoform is found in the nucleus while a 55 kDa isoform is found in the cytoplasm and colocalizes with the tubulin network.</text>
</comment>
<comment type="tissue specificity">
    <text evidence="3">Ubiquitously expressed. High expression in heart, skeletal muscle, kidney, liver and placenta.</text>
</comment>
<comment type="similarity">
    <text evidence="13">Belongs to the methyltransferase superfamily. Trimethylguanosine synthase family.</text>
</comment>
<comment type="sequence caution" evidence="13">
    <conflict type="erroneous initiation">
        <sequence resource="EMBL-CDS" id="AAH11999"/>
    </conflict>
    <text>Truncated N-terminus.</text>
</comment>
<comment type="sequence caution" evidence="13">
    <conflict type="erroneous initiation">
        <sequence resource="EMBL-CDS" id="BAB15516"/>
    </conflict>
    <text>Truncated N-terminus.</text>
</comment>
<dbReference type="EC" id="2.1.1.-" evidence="11"/>
<dbReference type="EMBL" id="AY028423">
    <property type="protein sequence ID" value="AAK27730.1"/>
    <property type="molecule type" value="mRNA"/>
</dbReference>
<dbReference type="EMBL" id="AF432215">
    <property type="protein sequence ID" value="AAL99922.1"/>
    <property type="molecule type" value="mRNA"/>
</dbReference>
<dbReference type="EMBL" id="AF286340">
    <property type="protein sequence ID" value="AAK83025.1"/>
    <property type="molecule type" value="mRNA"/>
</dbReference>
<dbReference type="EMBL" id="AC100817">
    <property type="status" value="NOT_ANNOTATED_CDS"/>
    <property type="molecule type" value="Genomic_DNA"/>
</dbReference>
<dbReference type="EMBL" id="AY534911">
    <property type="protein sequence ID" value="AAT02709.1"/>
    <property type="molecule type" value="mRNA"/>
</dbReference>
<dbReference type="EMBL" id="BC011999">
    <property type="protein sequence ID" value="AAH11999.1"/>
    <property type="status" value="ALT_INIT"/>
    <property type="molecule type" value="mRNA"/>
</dbReference>
<dbReference type="EMBL" id="AK026648">
    <property type="protein sequence ID" value="BAB15516.1"/>
    <property type="status" value="ALT_INIT"/>
    <property type="molecule type" value="mRNA"/>
</dbReference>
<dbReference type="CCDS" id="CCDS34894.1"/>
<dbReference type="RefSeq" id="NP_001304831.1">
    <property type="nucleotide sequence ID" value="NM_001317902.1"/>
</dbReference>
<dbReference type="RefSeq" id="NP_079107.6">
    <property type="nucleotide sequence ID" value="NM_024831.7"/>
</dbReference>
<dbReference type="PDB" id="3EGI">
    <property type="method" value="X-ray"/>
    <property type="resolution" value="2.21 A"/>
    <property type="chains" value="A/B/C/D=653-853"/>
</dbReference>
<dbReference type="PDB" id="3GDH">
    <property type="method" value="X-ray"/>
    <property type="resolution" value="2.00 A"/>
    <property type="chains" value="A/B/C=618-853"/>
</dbReference>
<dbReference type="PDBsum" id="3EGI"/>
<dbReference type="PDBsum" id="3GDH"/>
<dbReference type="SMR" id="Q96RS0"/>
<dbReference type="BioGRID" id="125179">
    <property type="interactions" value="82"/>
</dbReference>
<dbReference type="DIP" id="DIP-49970N"/>
<dbReference type="FunCoup" id="Q96RS0">
    <property type="interactions" value="3913"/>
</dbReference>
<dbReference type="IntAct" id="Q96RS0">
    <property type="interactions" value="70"/>
</dbReference>
<dbReference type="MINT" id="Q96RS0"/>
<dbReference type="STRING" id="9606.ENSP00000260129"/>
<dbReference type="iPTMnet" id="Q96RS0"/>
<dbReference type="PhosphoSitePlus" id="Q96RS0"/>
<dbReference type="BioMuta" id="TGS1"/>
<dbReference type="DMDM" id="317373500"/>
<dbReference type="jPOST" id="Q96RS0"/>
<dbReference type="MassIVE" id="Q96RS0"/>
<dbReference type="PaxDb" id="9606-ENSP00000260129"/>
<dbReference type="PeptideAtlas" id="Q96RS0"/>
<dbReference type="ProteomicsDB" id="78017"/>
<dbReference type="Pumba" id="Q96RS0"/>
<dbReference type="Antibodypedia" id="11709">
    <property type="antibodies" value="159 antibodies from 26 providers"/>
</dbReference>
<dbReference type="DNASU" id="96764"/>
<dbReference type="Ensembl" id="ENST00000260129.6">
    <property type="protein sequence ID" value="ENSP00000260129.5"/>
    <property type="gene ID" value="ENSG00000137574.11"/>
</dbReference>
<dbReference type="GeneID" id="96764"/>
<dbReference type="KEGG" id="hsa:96764"/>
<dbReference type="MANE-Select" id="ENST00000260129.6">
    <property type="protein sequence ID" value="ENSP00000260129.5"/>
    <property type="RefSeq nucleotide sequence ID" value="NM_024831.8"/>
    <property type="RefSeq protein sequence ID" value="NP_079107.6"/>
</dbReference>
<dbReference type="UCSC" id="uc003xsj.5">
    <property type="organism name" value="human"/>
</dbReference>
<dbReference type="AGR" id="HGNC:17843"/>
<dbReference type="CTD" id="96764"/>
<dbReference type="DisGeNET" id="96764"/>
<dbReference type="GeneCards" id="TGS1"/>
<dbReference type="HGNC" id="HGNC:17843">
    <property type="gene designation" value="TGS1"/>
</dbReference>
<dbReference type="HPA" id="ENSG00000137574">
    <property type="expression patterns" value="Low tissue specificity"/>
</dbReference>
<dbReference type="MIM" id="606461">
    <property type="type" value="gene"/>
</dbReference>
<dbReference type="neXtProt" id="NX_Q96RS0"/>
<dbReference type="OpenTargets" id="ENSG00000137574"/>
<dbReference type="PharmGKB" id="PA162405660"/>
<dbReference type="VEuPathDB" id="HostDB:ENSG00000137574"/>
<dbReference type="eggNOG" id="KOG2730">
    <property type="taxonomic scope" value="Eukaryota"/>
</dbReference>
<dbReference type="GeneTree" id="ENSGT00390000018056"/>
<dbReference type="HOGENOM" id="CLU_016892_0_0_1"/>
<dbReference type="InParanoid" id="Q96RS0"/>
<dbReference type="OMA" id="QSEPHNG"/>
<dbReference type="OrthoDB" id="194443at2759"/>
<dbReference type="PAN-GO" id="Q96RS0">
    <property type="GO annotations" value="3 GO annotations based on evolutionary models"/>
</dbReference>
<dbReference type="PhylomeDB" id="Q96RS0"/>
<dbReference type="TreeFam" id="TF313065"/>
<dbReference type="PathwayCommons" id="Q96RS0"/>
<dbReference type="Reactome" id="R-HSA-1368082">
    <property type="pathway name" value="RORA activates gene expression"/>
</dbReference>
<dbReference type="Reactome" id="R-HSA-1368108">
    <property type="pathway name" value="BMAL1:CLOCK,NPAS2 activates circadian gene expression"/>
</dbReference>
<dbReference type="Reactome" id="R-HSA-191859">
    <property type="pathway name" value="snRNP Assembly"/>
</dbReference>
<dbReference type="Reactome" id="R-HSA-1989781">
    <property type="pathway name" value="PPARA activates gene expression"/>
</dbReference>
<dbReference type="Reactome" id="R-HSA-2151201">
    <property type="pathway name" value="Transcriptional activation of mitochondrial biogenesis"/>
</dbReference>
<dbReference type="Reactome" id="R-HSA-2426168">
    <property type="pathway name" value="Activation of gene expression by SREBF (SREBP)"/>
</dbReference>
<dbReference type="Reactome" id="R-HSA-381340">
    <property type="pathway name" value="Transcriptional regulation of white adipocyte differentiation"/>
</dbReference>
<dbReference type="Reactome" id="R-HSA-400206">
    <property type="pathway name" value="Regulation of lipid metabolism by PPARalpha"/>
</dbReference>
<dbReference type="Reactome" id="R-HSA-400253">
    <property type="pathway name" value="Circadian Clock"/>
</dbReference>
<dbReference type="Reactome" id="R-HSA-9707564">
    <property type="pathway name" value="Cytoprotection by HMOX1"/>
</dbReference>
<dbReference type="Reactome" id="R-HSA-9707616">
    <property type="pathway name" value="Heme signaling"/>
</dbReference>
<dbReference type="SignaLink" id="Q96RS0"/>
<dbReference type="BioGRID-ORCS" id="96764">
    <property type="hits" value="547 hits in 1164 CRISPR screens"/>
</dbReference>
<dbReference type="CD-CODE" id="6F24707C">
    <property type="entry name" value="Cajal body"/>
</dbReference>
<dbReference type="ChiTaRS" id="TGS1">
    <property type="organism name" value="human"/>
</dbReference>
<dbReference type="EvolutionaryTrace" id="Q96RS0"/>
<dbReference type="GeneWiki" id="TGS1"/>
<dbReference type="GenomeRNAi" id="96764"/>
<dbReference type="Pharos" id="Q96RS0">
    <property type="development level" value="Tbio"/>
</dbReference>
<dbReference type="PRO" id="PR:Q96RS0"/>
<dbReference type="Proteomes" id="UP000005640">
    <property type="component" value="Chromosome 8"/>
</dbReference>
<dbReference type="RNAct" id="Q96RS0">
    <property type="molecule type" value="protein"/>
</dbReference>
<dbReference type="Bgee" id="ENSG00000137574">
    <property type="expression patterns" value="Expressed in tendon of biceps brachii and 193 other cell types or tissues"/>
</dbReference>
<dbReference type="ExpressionAtlas" id="Q96RS0">
    <property type="expression patterns" value="baseline and differential"/>
</dbReference>
<dbReference type="GO" id="GO:0015030">
    <property type="term" value="C:Cajal body"/>
    <property type="evidence" value="ECO:0007669"/>
    <property type="project" value="UniProtKB-SubCell"/>
</dbReference>
<dbReference type="GO" id="GO:0005737">
    <property type="term" value="C:cytoplasm"/>
    <property type="evidence" value="ECO:0000314"/>
    <property type="project" value="MGI"/>
</dbReference>
<dbReference type="GO" id="GO:0005829">
    <property type="term" value="C:cytosol"/>
    <property type="evidence" value="ECO:0000314"/>
    <property type="project" value="HPA"/>
</dbReference>
<dbReference type="GO" id="GO:0005615">
    <property type="term" value="C:extracellular space"/>
    <property type="evidence" value="ECO:0007005"/>
    <property type="project" value="UniProtKB"/>
</dbReference>
<dbReference type="GO" id="GO:0005730">
    <property type="term" value="C:nucleolus"/>
    <property type="evidence" value="ECO:0007669"/>
    <property type="project" value="UniProtKB-SubCell"/>
</dbReference>
<dbReference type="GO" id="GO:0005654">
    <property type="term" value="C:nucleoplasm"/>
    <property type="evidence" value="ECO:0000304"/>
    <property type="project" value="Reactome"/>
</dbReference>
<dbReference type="GO" id="GO:0005634">
    <property type="term" value="C:nucleus"/>
    <property type="evidence" value="ECO:0000314"/>
    <property type="project" value="MGI"/>
</dbReference>
<dbReference type="GO" id="GO:0030532">
    <property type="term" value="C:small nuclear ribonucleoprotein complex"/>
    <property type="evidence" value="ECO:0000305"/>
    <property type="project" value="BHF-UCL"/>
</dbReference>
<dbReference type="GO" id="GO:0071164">
    <property type="term" value="F:RNA cap trimethylguanosine synthase activity"/>
    <property type="evidence" value="ECO:0000314"/>
    <property type="project" value="BHF-UCL"/>
</dbReference>
<dbReference type="GO" id="GO:0008173">
    <property type="term" value="F:RNA methyltransferase activity"/>
    <property type="evidence" value="ECO:0000304"/>
    <property type="project" value="Reactome"/>
</dbReference>
<dbReference type="GO" id="GO:0036261">
    <property type="term" value="P:7-methylguanosine cap hypermethylation"/>
    <property type="evidence" value="ECO:0000314"/>
    <property type="project" value="BHF-UCL"/>
</dbReference>
<dbReference type="GO" id="GO:0022613">
    <property type="term" value="P:ribonucleoprotein complex biogenesis"/>
    <property type="evidence" value="ECO:0000305"/>
    <property type="project" value="BHF-UCL"/>
</dbReference>
<dbReference type="GO" id="GO:0000387">
    <property type="term" value="P:spliceosomal snRNP assembly"/>
    <property type="evidence" value="ECO:0000304"/>
    <property type="project" value="Reactome"/>
</dbReference>
<dbReference type="CDD" id="cd02440">
    <property type="entry name" value="AdoMet_MTases"/>
    <property type="match status" value="1"/>
</dbReference>
<dbReference type="DisProt" id="DP02445"/>
<dbReference type="FunFam" id="3.40.50.150:FF:000066">
    <property type="entry name" value="Trimethylguanosine synthase 1"/>
    <property type="match status" value="1"/>
</dbReference>
<dbReference type="Gene3D" id="3.40.50.150">
    <property type="entry name" value="Vaccinia Virus protein VP39"/>
    <property type="match status" value="1"/>
</dbReference>
<dbReference type="InterPro" id="IPR019012">
    <property type="entry name" value="RNA_cap_Gua-N2-MeTrfase"/>
</dbReference>
<dbReference type="InterPro" id="IPR029063">
    <property type="entry name" value="SAM-dependent_MTases_sf"/>
</dbReference>
<dbReference type="PANTHER" id="PTHR14741">
    <property type="entry name" value="S-ADENOSYLMETHIONINE-DEPENDENT METHYLTRANSFERASE RELATED"/>
    <property type="match status" value="1"/>
</dbReference>
<dbReference type="PANTHER" id="PTHR14741:SF32">
    <property type="entry name" value="TRIMETHYLGUANOSINE SYNTHASE"/>
    <property type="match status" value="1"/>
</dbReference>
<dbReference type="Pfam" id="PF09445">
    <property type="entry name" value="Methyltransf_15"/>
    <property type="match status" value="1"/>
</dbReference>
<dbReference type="SUPFAM" id="SSF53335">
    <property type="entry name" value="S-adenosyl-L-methionine-dependent methyltransferases"/>
    <property type="match status" value="1"/>
</dbReference>
<organism>
    <name type="scientific">Homo sapiens</name>
    <name type="common">Human</name>
    <dbReference type="NCBI Taxonomy" id="9606"/>
    <lineage>
        <taxon>Eukaryota</taxon>
        <taxon>Metazoa</taxon>
        <taxon>Chordata</taxon>
        <taxon>Craniata</taxon>
        <taxon>Vertebrata</taxon>
        <taxon>Euteleostomi</taxon>
        <taxon>Mammalia</taxon>
        <taxon>Eutheria</taxon>
        <taxon>Euarchontoglires</taxon>
        <taxon>Primates</taxon>
        <taxon>Haplorrhini</taxon>
        <taxon>Catarrhini</taxon>
        <taxon>Hominidae</taxon>
        <taxon>Homo</taxon>
    </lineage>
</organism>